<dbReference type="EMBL" id="D00320">
    <property type="protein sequence ID" value="BAA00223.1"/>
    <property type="molecule type" value="Genomic_DNA"/>
</dbReference>
<dbReference type="EMBL" id="AF198100">
    <property type="protein sequence ID" value="AAF44470.1"/>
    <property type="molecule type" value="Genomic_DNA"/>
</dbReference>
<dbReference type="PIR" id="JS0220">
    <property type="entry name" value="WMVZP0"/>
</dbReference>
<dbReference type="RefSeq" id="NP_039089.1">
    <property type="nucleotide sequence ID" value="NC_002188.1"/>
</dbReference>
<dbReference type="GeneID" id="1486674"/>
<dbReference type="KEGG" id="vg:1486674"/>
<dbReference type="Proteomes" id="UP000008597">
    <property type="component" value="Segment"/>
</dbReference>
<dbReference type="GO" id="GO:0006355">
    <property type="term" value="P:regulation of DNA-templated transcription"/>
    <property type="evidence" value="ECO:0007669"/>
    <property type="project" value="InterPro"/>
</dbReference>
<dbReference type="InterPro" id="IPR005022">
    <property type="entry name" value="Pox_TAP"/>
</dbReference>
<dbReference type="Pfam" id="PF03355">
    <property type="entry name" value="Pox_TAP"/>
    <property type="match status" value="1"/>
</dbReference>
<evidence type="ECO:0000250" key="1"/>
<evidence type="ECO:0000305" key="2"/>
<organismHost>
    <name type="scientific">Vertebrata</name>
    <dbReference type="NCBI Taxonomy" id="7742"/>
</organismHost>
<reference key="1">
    <citation type="journal article" date="1988" name="J. Gen. Virol.">
        <title>Comparison of a conserved region in fowlpox virus and vaccinia virus genomes and the translocation of the fowlpox virus thymidine kinase gene.</title>
        <authorList>
            <person name="Binns M.M."/>
            <person name="Tomley F.M."/>
            <person name="Campbell J."/>
            <person name="Boursnell M.E.G."/>
        </authorList>
    </citation>
    <scope>NUCLEOTIDE SEQUENCE [GENOMIC DNA]</scope>
    <source>
        <strain>FP-9 / Isolate HP-444</strain>
    </source>
</reference>
<reference key="2">
    <citation type="journal article" date="2000" name="J. Virol.">
        <title>The genome of fowlpox virus.</title>
        <authorList>
            <person name="Afonso C.L."/>
            <person name="Tulman E.R."/>
            <person name="Lu Z."/>
            <person name="Zsak L."/>
            <person name="Kutish G.F."/>
            <person name="Rock D.L."/>
        </authorList>
    </citation>
    <scope>NUCLEOTIDE SEQUENCE [LARGE SCALE GENOMIC DNA]</scope>
</reference>
<feature type="chain" id="PRO_0000099169" description="Late transcription factor 1">
    <location>
        <begin position="1"/>
        <end position="260"/>
    </location>
</feature>
<protein>
    <recommendedName>
        <fullName>Late transcription factor 1</fullName>
        <shortName>VLTF-1</shortName>
    </recommendedName>
</protein>
<accession>P15908</accession>
<proteinExistence type="evidence at transcript level"/>
<name>VLTF1_FOWPN</name>
<organism>
    <name type="scientific">Fowlpox virus (strain NVSL)</name>
    <name type="common">FPV</name>
    <dbReference type="NCBI Taxonomy" id="928301"/>
    <lineage>
        <taxon>Viruses</taxon>
        <taxon>Varidnaviria</taxon>
        <taxon>Bamfordvirae</taxon>
        <taxon>Nucleocytoviricota</taxon>
        <taxon>Pokkesviricetes</taxon>
        <taxon>Chitovirales</taxon>
        <taxon>Poxviridae</taxon>
        <taxon>Chordopoxvirinae</taxon>
        <taxon>Avipoxvirus</taxon>
        <taxon>Fowlpox virus</taxon>
    </lineage>
</organism>
<comment type="function">
    <text evidence="1">Associates with RNA polymerase to initiate transcription from late gene promoters.</text>
</comment>
<comment type="subunit">
    <text evidence="1">Interacts with the late transcription factors VLTF-2 and VLTF-3. Interacts with the late transcription elongation factor H5/VLTF-4. Interacts with itself (By similarity).</text>
</comment>
<comment type="induction">
    <text>Expressed in the intermediate phase of the viral replicative cycle.</text>
</comment>
<comment type="similarity">
    <text evidence="2">Belongs to the chordopoxvirinae VLTF-1 family.</text>
</comment>
<gene>
    <name type="primary">VLTF1</name>
    <name type="ordered locus">FPV126</name>
    <name type="ORF">FP0</name>
</gene>
<sequence length="260" mass="29853">MSLRIKIDKLRQLVTYFSEFSEEVSINIDVKSNVLYIFATLGGSINIWTIVPLNSNVFYNGVENTVFNLPVLKVKNCLCSFHNDAVVSITADHDNNTVTLSSHYTVSIDCNNEQIPHSTGTSISLGIDQKKSYIFNFHKYEEKCCGRTVFHLDMLLGFIKCISQYQYLNICFDDKKLLLKTPGTRDTFVRSYSMTEWSPTLQNYSFKIAIFSLNKLRGFKKRVLVFESKIVMDTEGNILGLLFRDRIGTYKVNVFMAFQD</sequence>
<keyword id="KW-0010">Activator</keyword>
<keyword id="KW-1185">Reference proteome</keyword>
<keyword id="KW-0804">Transcription</keyword>
<keyword id="KW-0805">Transcription regulation</keyword>